<feature type="chain" id="PRO_0000257383" description="Probable ribosomal RNA small subunit methyltransferase A">
    <location>
        <begin position="1"/>
        <end position="274"/>
    </location>
</feature>
<feature type="binding site" evidence="1">
    <location>
        <position position="22"/>
    </location>
    <ligand>
        <name>S-adenosyl-L-methionine</name>
        <dbReference type="ChEBI" id="CHEBI:59789"/>
    </ligand>
</feature>
<feature type="binding site" evidence="1">
    <location>
        <position position="24"/>
    </location>
    <ligand>
        <name>S-adenosyl-L-methionine</name>
        <dbReference type="ChEBI" id="CHEBI:59789"/>
    </ligand>
</feature>
<feature type="binding site" evidence="1">
    <location>
        <position position="50"/>
    </location>
    <ligand>
        <name>S-adenosyl-L-methionine</name>
        <dbReference type="ChEBI" id="CHEBI:59789"/>
    </ligand>
</feature>
<feature type="binding site" evidence="1">
    <location>
        <position position="71"/>
    </location>
    <ligand>
        <name>S-adenosyl-L-methionine</name>
        <dbReference type="ChEBI" id="CHEBI:59789"/>
    </ligand>
</feature>
<feature type="binding site" evidence="1">
    <location>
        <position position="99"/>
    </location>
    <ligand>
        <name>S-adenosyl-L-methionine</name>
        <dbReference type="ChEBI" id="CHEBI:59789"/>
    </ligand>
</feature>
<feature type="binding site" evidence="1">
    <location>
        <position position="114"/>
    </location>
    <ligand>
        <name>S-adenosyl-L-methionine</name>
        <dbReference type="ChEBI" id="CHEBI:59789"/>
    </ligand>
</feature>
<proteinExistence type="inferred from homology"/>
<organism>
    <name type="scientific">Natronomonas pharaonis (strain ATCC 35678 / DSM 2160 / CIP 103997 / JCM 8858 / NBRC 14720 / NCIMB 2260 / Gabara)</name>
    <name type="common">Halobacterium pharaonis</name>
    <dbReference type="NCBI Taxonomy" id="348780"/>
    <lineage>
        <taxon>Archaea</taxon>
        <taxon>Methanobacteriati</taxon>
        <taxon>Methanobacteriota</taxon>
        <taxon>Stenosarchaea group</taxon>
        <taxon>Halobacteria</taxon>
        <taxon>Halobacteriales</taxon>
        <taxon>Haloarculaceae</taxon>
        <taxon>Natronomonas</taxon>
    </lineage>
</organism>
<keyword id="KW-0963">Cytoplasm</keyword>
<keyword id="KW-0489">Methyltransferase</keyword>
<keyword id="KW-1185">Reference proteome</keyword>
<keyword id="KW-0694">RNA-binding</keyword>
<keyword id="KW-0698">rRNA processing</keyword>
<keyword id="KW-0949">S-adenosyl-L-methionine</keyword>
<keyword id="KW-0808">Transferase</keyword>
<dbReference type="EC" id="2.1.1.-" evidence="1"/>
<dbReference type="EMBL" id="CR936257">
    <property type="protein sequence ID" value="CAI49930.1"/>
    <property type="molecule type" value="Genomic_DNA"/>
</dbReference>
<dbReference type="RefSeq" id="WP_011323548.1">
    <property type="nucleotide sequence ID" value="NC_007426.1"/>
</dbReference>
<dbReference type="SMR" id="Q3IPM0"/>
<dbReference type="STRING" id="348780.NP_3678A"/>
<dbReference type="EnsemblBacteria" id="CAI49930">
    <property type="protein sequence ID" value="CAI49930"/>
    <property type="gene ID" value="NP_3678A"/>
</dbReference>
<dbReference type="GeneID" id="3702875"/>
<dbReference type="KEGG" id="nph:NP_3678A"/>
<dbReference type="eggNOG" id="arCOG04131">
    <property type="taxonomic scope" value="Archaea"/>
</dbReference>
<dbReference type="HOGENOM" id="CLU_041220_0_2_2"/>
<dbReference type="OrthoDB" id="9883at2157"/>
<dbReference type="Proteomes" id="UP000002698">
    <property type="component" value="Chromosome"/>
</dbReference>
<dbReference type="GO" id="GO:0005737">
    <property type="term" value="C:cytoplasm"/>
    <property type="evidence" value="ECO:0007669"/>
    <property type="project" value="UniProtKB-SubCell"/>
</dbReference>
<dbReference type="GO" id="GO:0003723">
    <property type="term" value="F:RNA binding"/>
    <property type="evidence" value="ECO:0007669"/>
    <property type="project" value="UniProtKB-KW"/>
</dbReference>
<dbReference type="GO" id="GO:0000179">
    <property type="term" value="F:rRNA (adenine-N6,N6-)-dimethyltransferase activity"/>
    <property type="evidence" value="ECO:0007669"/>
    <property type="project" value="InterPro"/>
</dbReference>
<dbReference type="CDD" id="cd02440">
    <property type="entry name" value="AdoMet_MTases"/>
    <property type="match status" value="1"/>
</dbReference>
<dbReference type="Gene3D" id="1.10.8.100">
    <property type="entry name" value="Ribosomal RNA adenine dimethylase-like, domain 2"/>
    <property type="match status" value="1"/>
</dbReference>
<dbReference type="Gene3D" id="3.40.50.150">
    <property type="entry name" value="Vaccinia Virus protein VP39"/>
    <property type="match status" value="1"/>
</dbReference>
<dbReference type="HAMAP" id="MF_00607">
    <property type="entry name" value="16SrRNA_methyltr_A"/>
    <property type="match status" value="1"/>
</dbReference>
<dbReference type="InterPro" id="IPR001737">
    <property type="entry name" value="KsgA/Erm"/>
</dbReference>
<dbReference type="InterPro" id="IPR023165">
    <property type="entry name" value="rRNA_Ade_diMease-like_C"/>
</dbReference>
<dbReference type="InterPro" id="IPR020596">
    <property type="entry name" value="rRNA_Ade_Mease_Trfase_CS"/>
</dbReference>
<dbReference type="InterPro" id="IPR020598">
    <property type="entry name" value="rRNA_Ade_methylase_Trfase_N"/>
</dbReference>
<dbReference type="InterPro" id="IPR011530">
    <property type="entry name" value="rRNA_adenine_dimethylase"/>
</dbReference>
<dbReference type="InterPro" id="IPR029063">
    <property type="entry name" value="SAM-dependent_MTases_sf"/>
</dbReference>
<dbReference type="NCBIfam" id="TIGR00755">
    <property type="entry name" value="ksgA"/>
    <property type="match status" value="1"/>
</dbReference>
<dbReference type="NCBIfam" id="NF011486">
    <property type="entry name" value="PRK14896.1-1"/>
    <property type="match status" value="1"/>
</dbReference>
<dbReference type="PANTHER" id="PTHR11727">
    <property type="entry name" value="DIMETHYLADENOSINE TRANSFERASE"/>
    <property type="match status" value="1"/>
</dbReference>
<dbReference type="PANTHER" id="PTHR11727:SF7">
    <property type="entry name" value="DIMETHYLADENOSINE TRANSFERASE-RELATED"/>
    <property type="match status" value="1"/>
</dbReference>
<dbReference type="Pfam" id="PF00398">
    <property type="entry name" value="RrnaAD"/>
    <property type="match status" value="1"/>
</dbReference>
<dbReference type="SMART" id="SM00650">
    <property type="entry name" value="rADc"/>
    <property type="match status" value="1"/>
</dbReference>
<dbReference type="SUPFAM" id="SSF53335">
    <property type="entry name" value="S-adenosyl-L-methionine-dependent methyltransferases"/>
    <property type="match status" value="1"/>
</dbReference>
<dbReference type="PROSITE" id="PS01131">
    <property type="entry name" value="RRNA_A_DIMETH"/>
    <property type="match status" value="1"/>
</dbReference>
<dbReference type="PROSITE" id="PS51689">
    <property type="entry name" value="SAM_RNA_A_N6_MT"/>
    <property type="match status" value="1"/>
</dbReference>
<accession>Q3IPM0</accession>
<reference key="1">
    <citation type="journal article" date="2005" name="Genome Res.">
        <title>Living with two extremes: conclusions from the genome sequence of Natronomonas pharaonis.</title>
        <authorList>
            <person name="Falb M."/>
            <person name="Pfeiffer F."/>
            <person name="Palm P."/>
            <person name="Rodewald K."/>
            <person name="Hickmann V."/>
            <person name="Tittor J."/>
            <person name="Oesterhelt D."/>
        </authorList>
    </citation>
    <scope>NUCLEOTIDE SEQUENCE [LARGE SCALE GENOMIC DNA]</scope>
    <source>
        <strain>ATCC 35678 / DSM 2160 / CIP 103997 / JCM 8858 / NBRC 14720 / NCIMB 2260 / Gabara</strain>
    </source>
</reference>
<name>RSMA_NATPD</name>
<comment type="function">
    <text evidence="1">Specifically dimethylates two adjacent adenosines in the loop of a conserved hairpin near the 3'-end of 16S rRNA in the 30S particle. May play a critical role in biogenesis of 30S subunits.</text>
</comment>
<comment type="subcellular location">
    <subcellularLocation>
        <location evidence="1">Cytoplasm</location>
    </subcellularLocation>
</comment>
<comment type="similarity">
    <text evidence="1">Belongs to the class I-like SAM-binding methyltransferase superfamily. rRNA adenine N(6)-methyltransferase family. RsmA subfamily.</text>
</comment>
<sequence length="274" mass="29863">MRDPDALLVRAGVRGDPERDQHFLIDDRVLDRLPGYLPDSADTDHVLEIGGGTGALTDRLLDVADRVTVIERDPGLATFLTDEFADEIEAGSLTVIEGDALEVPLPDFTASVSNLPYGVSSEIAFRLLPEKRPLVLMFQQEFAERMAAEPGTDEYGRLSVTAGHYADVEVVEPVPKEAFSPPPAVESAVVRTTPREPPYEVPDDELFMRLVRAVFTQRRKTMRNAVRNTTHISGIEDAEAVVEAAGEDLMSKRAGNVPPEAFARLAAIAAEVDG</sequence>
<gene>
    <name evidence="1" type="primary">rsmA</name>
    <name evidence="1" type="synonym">ksgA</name>
    <name type="ordered locus">NP_3678A</name>
</gene>
<evidence type="ECO:0000255" key="1">
    <source>
        <dbReference type="HAMAP-Rule" id="MF_00607"/>
    </source>
</evidence>
<protein>
    <recommendedName>
        <fullName evidence="1">Probable ribosomal RNA small subunit methyltransferase A</fullName>
        <ecNumber evidence="1">2.1.1.-</ecNumber>
    </recommendedName>
    <alternativeName>
        <fullName evidence="1">16S rRNA dimethyladenosine transferase</fullName>
    </alternativeName>
    <alternativeName>
        <fullName evidence="1">16S rRNA dimethylase</fullName>
    </alternativeName>
    <alternativeName>
        <fullName evidence="1">S-adenosylmethionine-6-N',N'-adenosyl(rRNA) dimethyltransferase</fullName>
    </alternativeName>
</protein>